<accession>F4RWV0</accession>
<evidence type="ECO:0000255" key="1"/>
<evidence type="ECO:0000269" key="2">
    <source>
    </source>
</evidence>
<evidence type="ECO:0000269" key="3">
    <source>
    </source>
</evidence>
<evidence type="ECO:0000269" key="4">
    <source>
    </source>
</evidence>
<evidence type="ECO:0000269" key="5">
    <source>
    </source>
</evidence>
<evidence type="ECO:0000303" key="6">
    <source>
    </source>
</evidence>
<evidence type="ECO:0000303" key="7">
    <source>
    </source>
</evidence>
<evidence type="ECO:0000305" key="8"/>
<protein>
    <recommendedName>
        <fullName evidence="7">Candidate secreted effector protein MPL124497</fullName>
        <shortName evidence="7">CSEP MPL124497</shortName>
    </recommendedName>
    <alternativeName>
        <fullName evidence="6">Small secreted protein MPL124497</fullName>
        <shortName evidence="6">SSP MPL124497</shortName>
    </alternativeName>
</protein>
<proteinExistence type="evidence at transcript level"/>
<comment type="function">
    <text evidence="5">Rust effector delivered into infected tissues to modulate host functions and contribute to pathogen virulence (PubMed:27868319). Enhances leaf colonization by the bacteria Pseudomonas syringae and the oomycete Hyaloperonospora arabidopsidis pathogens in an Arabidopsis thaliana infection model (PubMed:27868319).</text>
</comment>
<comment type="subcellular location">
    <subcellularLocation>
        <location evidence="4">Secreted</location>
    </subcellularLocation>
    <subcellularLocation>
        <location evidence="4">Host cell</location>
    </subcellularLocation>
    <subcellularLocation>
        <location evidence="5">Host cytoplasm</location>
    </subcellularLocation>
    <subcellularLocation>
        <location evidence="5">Host nucleus</location>
    </subcellularLocation>
</comment>
<comment type="induction">
    <text evidence="2 3 4">Expression is induced during host infection.</text>
</comment>
<comment type="similarity">
    <text evidence="8">Belongs to the CPGH1 family.</text>
</comment>
<gene>
    <name type="ORF">MELLADRAFT_124497</name>
    <name type="ORF">MPL124497</name>
</gene>
<reference key="1">
    <citation type="journal article" date="2011" name="Proc. Natl. Acad. Sci. U.S.A.">
        <title>Obligate biotrophy features unraveled by the genomic analysis of rust fungi.</title>
        <authorList>
            <person name="Duplessis S."/>
            <person name="Cuomo C.A."/>
            <person name="Lin Y.-C."/>
            <person name="Aerts A."/>
            <person name="Tisserant E."/>
            <person name="Veneault-Fourrey C."/>
            <person name="Joly D.L."/>
            <person name="Hacquard S."/>
            <person name="Amselem J."/>
            <person name="Cantarel B.L."/>
            <person name="Chiu R."/>
            <person name="Coutinho P.M."/>
            <person name="Feau N."/>
            <person name="Field M."/>
            <person name="Frey P."/>
            <person name="Gelhaye E."/>
            <person name="Goldberg J."/>
            <person name="Grabherr M.G."/>
            <person name="Kodira C.D."/>
            <person name="Kohler A."/>
            <person name="Kuees U."/>
            <person name="Lindquist E.A."/>
            <person name="Lucas S.M."/>
            <person name="Mago R."/>
            <person name="Mauceli E."/>
            <person name="Morin E."/>
            <person name="Murat C."/>
            <person name="Pangilinan J.L."/>
            <person name="Park R."/>
            <person name="Pearson M."/>
            <person name="Quesneville H."/>
            <person name="Rouhier N."/>
            <person name="Sakthikumar S."/>
            <person name="Salamov A.A."/>
            <person name="Schmutz J."/>
            <person name="Selles B."/>
            <person name="Shapiro H."/>
            <person name="Tanguay P."/>
            <person name="Tuskan G.A."/>
            <person name="Henrissat B."/>
            <person name="Van de Peer Y."/>
            <person name="Rouze P."/>
            <person name="Ellis J.G."/>
            <person name="Dodds P.N."/>
            <person name="Schein J.E."/>
            <person name="Zhong S."/>
            <person name="Hamelin R.C."/>
            <person name="Grigoriev I.V."/>
            <person name="Szabo L.J."/>
            <person name="Martin F."/>
        </authorList>
    </citation>
    <scope>NUCLEOTIDE SEQUENCE [LARGE SCALE GENOMIC DNA]</scope>
    <scope>IDENTIFICATION</scope>
    <scope>INDUCTION</scope>
    <source>
        <strain>98AG31 / pathotype 3-4-7</strain>
    </source>
</reference>
<reference key="2">
    <citation type="journal article" date="2010" name="BMC Genomics">
        <title>Comparative analysis of secreted protein evolution using expressed sequence tags from four poplar leaf rusts (Melampsora spp.).</title>
        <authorList>
            <person name="Joly D.L."/>
            <person name="Feau N."/>
            <person name="Tanguay P."/>
            <person name="Hamelin R.C."/>
        </authorList>
    </citation>
    <scope>INDUCTION</scope>
</reference>
<reference key="3">
    <citation type="journal article" date="2012" name="Mol. Plant Microbe Interact.">
        <title>A comprehensive analysis of genes encoding small secreted proteins identifies candidate effectors in Melampsora larici-populina (poplar leaf rust).</title>
        <authorList>
            <person name="Hacquard S."/>
            <person name="Joly D.L."/>
            <person name="Lin Y.C."/>
            <person name="Tisserant E."/>
            <person name="Feau N."/>
            <person name="Delaruelle C."/>
            <person name="Legue V."/>
            <person name="Kohler A."/>
            <person name="Tanguay P."/>
            <person name="Petre B."/>
            <person name="Frey P."/>
            <person name="Van de Peer Y."/>
            <person name="Rouze P."/>
            <person name="Martin F."/>
            <person name="Hamelin R.C."/>
            <person name="Duplessis S."/>
        </authorList>
    </citation>
    <scope>INDUCTION</scope>
    <scope>SUBCELLULAR LOCATION</scope>
</reference>
<reference key="4">
    <citation type="journal article" date="2018" name="Mol. Plant Pathol.">
        <title>Infection assays in Arabidopsis reveal candidate effectors from the poplar rust fungus that promote susceptibility to bacteria and oomycete pathogens.</title>
        <authorList>
            <person name="Germain H."/>
            <person name="Joly D.L."/>
            <person name="Mireault C."/>
            <person name="Plourde M.B."/>
            <person name="Letanneur C."/>
            <person name="Stewart D."/>
            <person name="Morency M.J."/>
            <person name="Petre B."/>
            <person name="Duplessis S."/>
            <person name="Seguin A."/>
        </authorList>
    </citation>
    <scope>FUNCTION</scope>
    <scope>SUBCELLULAR LOCATION</scope>
</reference>
<feature type="signal peptide" evidence="1">
    <location>
        <begin position="1"/>
        <end position="21"/>
    </location>
</feature>
<feature type="chain" id="PRO_5003315567" description="Candidate secreted effector protein MPL124497">
    <location>
        <begin position="22"/>
        <end position="76"/>
    </location>
</feature>
<dbReference type="EMBL" id="GL883126">
    <property type="protein sequence ID" value="EGG03160.1"/>
    <property type="molecule type" value="Genomic_DNA"/>
</dbReference>
<dbReference type="RefSeq" id="XP_007413620.1">
    <property type="nucleotide sequence ID" value="XM_007413558.1"/>
</dbReference>
<dbReference type="EnsemblFungi" id="EGG03160">
    <property type="protein sequence ID" value="EGG03160"/>
    <property type="gene ID" value="MELLADRAFT_124497"/>
</dbReference>
<dbReference type="GeneID" id="18926784"/>
<dbReference type="KEGG" id="mlr:MELLADRAFT_124497"/>
<dbReference type="VEuPathDB" id="FungiDB:MELLADRAFT_124497"/>
<dbReference type="HOGENOM" id="CLU_198490_1_0_1"/>
<dbReference type="InParanoid" id="F4RWV0"/>
<dbReference type="Proteomes" id="UP000001072">
    <property type="component" value="Unassembled WGS sequence"/>
</dbReference>
<dbReference type="GO" id="GO:0005576">
    <property type="term" value="C:extracellular region"/>
    <property type="evidence" value="ECO:0007669"/>
    <property type="project" value="UniProtKB-SubCell"/>
</dbReference>
<dbReference type="GO" id="GO:0043657">
    <property type="term" value="C:host cell"/>
    <property type="evidence" value="ECO:0007669"/>
    <property type="project" value="UniProtKB-SubCell"/>
</dbReference>
<dbReference type="GO" id="GO:0030430">
    <property type="term" value="C:host cell cytoplasm"/>
    <property type="evidence" value="ECO:0007669"/>
    <property type="project" value="UniProtKB-SubCell"/>
</dbReference>
<dbReference type="GO" id="GO:0042025">
    <property type="term" value="C:host cell nucleus"/>
    <property type="evidence" value="ECO:0007669"/>
    <property type="project" value="UniProtKB-SubCell"/>
</dbReference>
<name>CSEPB_MELLP</name>
<organism>
    <name type="scientific">Melampsora larici-populina (strain 98AG31 / pathotype 3-4-7)</name>
    <name type="common">Poplar leaf rust fungus</name>
    <dbReference type="NCBI Taxonomy" id="747676"/>
    <lineage>
        <taxon>Eukaryota</taxon>
        <taxon>Fungi</taxon>
        <taxon>Dikarya</taxon>
        <taxon>Basidiomycota</taxon>
        <taxon>Pucciniomycotina</taxon>
        <taxon>Pucciniomycetes</taxon>
        <taxon>Pucciniales</taxon>
        <taxon>Melampsoraceae</taxon>
        <taxon>Melampsora</taxon>
    </lineage>
</organism>
<keyword id="KW-1035">Host cytoplasm</keyword>
<keyword id="KW-1048">Host nucleus</keyword>
<keyword id="KW-1185">Reference proteome</keyword>
<keyword id="KW-0964">Secreted</keyword>
<keyword id="KW-0732">Signal</keyword>
<keyword id="KW-0843">Virulence</keyword>
<sequence>MKLIIFAAISVAFMSFDQVLGSMLHGVKSEEAMMIADGSVVKPIDHGGPTTEPDGCQVCIAYNWGCSACQRKKNGK</sequence>